<gene>
    <name evidence="1" type="primary">glnD</name>
    <name type="ordered locus">CV_2917</name>
</gene>
<reference key="1">
    <citation type="journal article" date="2003" name="Proc. Natl. Acad. Sci. U.S.A.">
        <title>The complete genome sequence of Chromobacterium violaceum reveals remarkable and exploitable bacterial adaptability.</title>
        <authorList>
            <person name="Vasconcelos A.T.R."/>
            <person name="de Almeida D.F."/>
            <person name="Hungria M."/>
            <person name="Guimaraes C.T."/>
            <person name="Antonio R.V."/>
            <person name="Almeida F.C."/>
            <person name="de Almeida L.G.P."/>
            <person name="de Almeida R."/>
            <person name="Alves-Gomes J.A."/>
            <person name="Andrade E.M."/>
            <person name="Araripe J."/>
            <person name="de Araujo M.F.F."/>
            <person name="Astolfi-Filho S."/>
            <person name="Azevedo V."/>
            <person name="Baptista A.J."/>
            <person name="Bataus L.A.M."/>
            <person name="Batista J.S."/>
            <person name="Belo A."/>
            <person name="van den Berg C."/>
            <person name="Bogo M."/>
            <person name="Bonatto S."/>
            <person name="Bordignon J."/>
            <person name="Brigido M.M."/>
            <person name="Brito C.A."/>
            <person name="Brocchi M."/>
            <person name="Burity H.A."/>
            <person name="Camargo A.A."/>
            <person name="Cardoso D.D.P."/>
            <person name="Carneiro N.P."/>
            <person name="Carraro D.M."/>
            <person name="Carvalho C.M.B."/>
            <person name="Cascardo J.C.M."/>
            <person name="Cavada B.S."/>
            <person name="Chueire L.M.O."/>
            <person name="Creczynski-Pasa T.B."/>
            <person name="Cunha-Junior N.C."/>
            <person name="Fagundes N."/>
            <person name="Falcao C.L."/>
            <person name="Fantinatti F."/>
            <person name="Farias I.P."/>
            <person name="Felipe M.S.S."/>
            <person name="Ferrari L.P."/>
            <person name="Ferro J.A."/>
            <person name="Ferro M.I.T."/>
            <person name="Franco G.R."/>
            <person name="Freitas N.S.A."/>
            <person name="Furlan L.R."/>
            <person name="Gazzinelli R.T."/>
            <person name="Gomes E.A."/>
            <person name="Goncalves P.R."/>
            <person name="Grangeiro T.B."/>
            <person name="Grattapaglia D."/>
            <person name="Grisard E.C."/>
            <person name="Hanna E.S."/>
            <person name="Jardim S.N."/>
            <person name="Laurino J."/>
            <person name="Leoi L.C.T."/>
            <person name="Lima L.F.A."/>
            <person name="Loureiro M.F."/>
            <person name="Lyra M.C.C.P."/>
            <person name="Madeira H.M.F."/>
            <person name="Manfio G.P."/>
            <person name="Maranhao A.Q."/>
            <person name="Martins W.S."/>
            <person name="di Mauro S.M.Z."/>
            <person name="de Medeiros S.R.B."/>
            <person name="Meissner R.V."/>
            <person name="Moreira M.A.M."/>
            <person name="Nascimento F.F."/>
            <person name="Nicolas M.F."/>
            <person name="Oliveira J.G."/>
            <person name="Oliveira S.C."/>
            <person name="Paixao R.F.C."/>
            <person name="Parente J.A."/>
            <person name="Pedrosa F.O."/>
            <person name="Pena S.D.J."/>
            <person name="Pereira J.O."/>
            <person name="Pereira M."/>
            <person name="Pinto L.S.R.C."/>
            <person name="Pinto L.S."/>
            <person name="Porto J.I.R."/>
            <person name="Potrich D.P."/>
            <person name="Ramalho-Neto C.E."/>
            <person name="Reis A.M.M."/>
            <person name="Rigo L.U."/>
            <person name="Rondinelli E."/>
            <person name="Santos E.B.P."/>
            <person name="Santos F.R."/>
            <person name="Schneider M.P.C."/>
            <person name="Seuanez H.N."/>
            <person name="Silva A.M.R."/>
            <person name="da Silva A.L.C."/>
            <person name="Silva D.W."/>
            <person name="Silva R."/>
            <person name="Simoes I.C."/>
            <person name="Simon D."/>
            <person name="Soares C.M.A."/>
            <person name="Soares R.B.A."/>
            <person name="Souza E.M."/>
            <person name="Souza K.R.L."/>
            <person name="Souza R.C."/>
            <person name="Steffens M.B.R."/>
            <person name="Steindel M."/>
            <person name="Teixeira S.R."/>
            <person name="Urmenyi T."/>
            <person name="Vettore A."/>
            <person name="Wassem R."/>
            <person name="Zaha A."/>
            <person name="Simpson A.J.G."/>
        </authorList>
    </citation>
    <scope>NUCLEOTIDE SEQUENCE [LARGE SCALE GENOMIC DNA]</scope>
    <source>
        <strain>ATCC 12472 / DSM 30191 / JCM 1249 / CCUG 213 / NBRC 12614 / NCIMB 9131 / NCTC 9757 / MK</strain>
    </source>
</reference>
<evidence type="ECO:0000255" key="1">
    <source>
        <dbReference type="HAMAP-Rule" id="MF_00277"/>
    </source>
</evidence>
<evidence type="ECO:0000255" key="2">
    <source>
        <dbReference type="PROSITE-ProRule" id="PRU01175"/>
    </source>
</evidence>
<protein>
    <recommendedName>
        <fullName evidence="1">Bifunctional uridylyltransferase/uridylyl-removing enzyme</fullName>
        <shortName evidence="1">UTase/UR</shortName>
    </recommendedName>
    <alternativeName>
        <fullName evidence="1">Bifunctional [protein-PII] modification enzyme</fullName>
    </alternativeName>
    <alternativeName>
        <fullName evidence="1">Bifunctional nitrogen sensor protein</fullName>
    </alternativeName>
    <domain>
        <recommendedName>
            <fullName evidence="1">[Protein-PII] uridylyltransferase</fullName>
            <shortName evidence="1">PII uridylyltransferase</shortName>
            <shortName evidence="1">UTase</shortName>
            <ecNumber evidence="1">2.7.7.59</ecNumber>
        </recommendedName>
    </domain>
    <domain>
        <recommendedName>
            <fullName evidence="1">[Protein-PII]-UMP uridylyl-removing enzyme</fullName>
            <shortName evidence="1">UR</shortName>
            <ecNumber evidence="1">3.1.4.-</ecNumber>
        </recommendedName>
    </domain>
</protein>
<feature type="chain" id="PRO_0000192728" description="Bifunctional uridylyltransferase/uridylyl-removing enzyme">
    <location>
        <begin position="1"/>
        <end position="856"/>
    </location>
</feature>
<feature type="domain" description="HD" evidence="2">
    <location>
        <begin position="439"/>
        <end position="561"/>
    </location>
</feature>
<feature type="domain" description="ACT 1" evidence="1">
    <location>
        <begin position="679"/>
        <end position="760"/>
    </location>
</feature>
<feature type="domain" description="ACT 2" evidence="1">
    <location>
        <begin position="788"/>
        <end position="856"/>
    </location>
</feature>
<feature type="region of interest" description="Uridylyltransferase">
    <location>
        <begin position="1"/>
        <end position="320"/>
    </location>
</feature>
<feature type="region of interest" description="Uridylyl-removing">
    <location>
        <begin position="321"/>
        <end position="678"/>
    </location>
</feature>
<comment type="function">
    <text evidence="1">Modifies, by uridylylation and deuridylylation, the PII regulatory proteins (GlnB and homologs), in response to the nitrogen status of the cell that GlnD senses through the glutamine level. Under low glutamine levels, catalyzes the conversion of the PII proteins and UTP to PII-UMP and PPi, while under higher glutamine levels, GlnD hydrolyzes PII-UMP to PII and UMP (deuridylylation). Thus, controls uridylylation state and activity of the PII proteins, and plays an important role in the regulation of nitrogen assimilation and metabolism.</text>
</comment>
<comment type="catalytic activity">
    <reaction evidence="1">
        <text>[protein-PII]-L-tyrosine + UTP = [protein-PII]-uridylyl-L-tyrosine + diphosphate</text>
        <dbReference type="Rhea" id="RHEA:13673"/>
        <dbReference type="Rhea" id="RHEA-COMP:12147"/>
        <dbReference type="Rhea" id="RHEA-COMP:12148"/>
        <dbReference type="ChEBI" id="CHEBI:33019"/>
        <dbReference type="ChEBI" id="CHEBI:46398"/>
        <dbReference type="ChEBI" id="CHEBI:46858"/>
        <dbReference type="ChEBI" id="CHEBI:90602"/>
        <dbReference type="EC" id="2.7.7.59"/>
    </reaction>
</comment>
<comment type="catalytic activity">
    <reaction evidence="1">
        <text>[protein-PII]-uridylyl-L-tyrosine + H2O = [protein-PII]-L-tyrosine + UMP + H(+)</text>
        <dbReference type="Rhea" id="RHEA:48600"/>
        <dbReference type="Rhea" id="RHEA-COMP:12147"/>
        <dbReference type="Rhea" id="RHEA-COMP:12148"/>
        <dbReference type="ChEBI" id="CHEBI:15377"/>
        <dbReference type="ChEBI" id="CHEBI:15378"/>
        <dbReference type="ChEBI" id="CHEBI:46858"/>
        <dbReference type="ChEBI" id="CHEBI:57865"/>
        <dbReference type="ChEBI" id="CHEBI:90602"/>
    </reaction>
</comment>
<comment type="cofactor">
    <cofactor evidence="1">
        <name>Mg(2+)</name>
        <dbReference type="ChEBI" id="CHEBI:18420"/>
    </cofactor>
</comment>
<comment type="activity regulation">
    <text evidence="1">Uridylyltransferase (UTase) activity is inhibited by glutamine, while glutamine activates uridylyl-removing (UR) activity.</text>
</comment>
<comment type="domain">
    <text evidence="1">Has four distinct domains: an N-terminal nucleotidyltransferase (NT) domain responsible for UTase activity, a central HD domain that encodes UR activity, and two C-terminal ACT domains that seem to have a role in glutamine sensing.</text>
</comment>
<comment type="similarity">
    <text evidence="1">Belongs to the GlnD family.</text>
</comment>
<organism>
    <name type="scientific">Chromobacterium violaceum (strain ATCC 12472 / DSM 30191 / JCM 1249 / CCUG 213 / NBRC 12614 / NCIMB 9131 / NCTC 9757 / MK)</name>
    <dbReference type="NCBI Taxonomy" id="243365"/>
    <lineage>
        <taxon>Bacteria</taxon>
        <taxon>Pseudomonadati</taxon>
        <taxon>Pseudomonadota</taxon>
        <taxon>Betaproteobacteria</taxon>
        <taxon>Neisseriales</taxon>
        <taxon>Chromobacteriaceae</taxon>
        <taxon>Chromobacterium</taxon>
    </lineage>
</organism>
<proteinExistence type="inferred from homology"/>
<accession>Q7NTY6</accession>
<name>GLND_CHRVO</name>
<keyword id="KW-0378">Hydrolase</keyword>
<keyword id="KW-0460">Magnesium</keyword>
<keyword id="KW-0511">Multifunctional enzyme</keyword>
<keyword id="KW-0548">Nucleotidyltransferase</keyword>
<keyword id="KW-1185">Reference proteome</keyword>
<keyword id="KW-0677">Repeat</keyword>
<keyword id="KW-0808">Transferase</keyword>
<sequence length="856" mass="97141">MTLSAAPLQHWRQTLAEKRQQLADAYRADRDAPAFLRRYSQAVDQTLAALWREQGLDGQAALAAVGGYGRGQLFPCSDVDILILLPDPTPAEINDKVSHFIGLMWDIGLEIGHSVRTLDECLREAAGDITIETNLLENRLVAGPAEPWRELMRRLEAQRDPLAFFEGKTLEQQQRHTRHFGVSNNLEPNLKESPGGLRDLHTILWISKAAGLGDNWDSLVRRGILTLAEARLIKHSEEQLQKLRVDLHLLARRREDRLIFDLQQQVAQAWGLADTPAKRASEQLMQLYFRAAKTVNQLNGILLPNLRGRIYCQVPRVTQHISEYFHAVNGMLGIREVNVFDKHPHAILEAFLTLQRHPELSGFAPRMLRALWHGRSQINDRFRSDPRNRATFMQIFREPSGLTRTLRRMNLYGILGQYLPNFGQIVGQMQHDLFHVYTVDEHILMVVRNLRRFAISAYNHEYPFLSRLINDFERPEVLYLAGLFHDIAKGRGGDHSQLGIADADAFCRDHGLAEEDCQLVAWLVGQHLTMSSIAQKQDIYDPETVQRFAELVRTPRRLAALYLLTVADIRGTSPKVWNTWKAKLLEDLYHATLRVLSRGGEIDLASELEARKNQARAQLRLHAIPDAAEAGLWAQLDTVYFLRHEAKEIAWHARVLNRQLSPDTPQVRARLADDHEGLQVLIYSPDKPELFARACAFFGRTNYSIADAKVYTTRHGYALDTFHVFVPEHHDGDYRDMINFIEFELAAALATDQPLQLPPQGRISRHLKHFPITPQVSIRPDDKDSDFILSIVAGDRPGLLARIAKVLADYRLNVRSAKIMTLGGRAEDSFQVSGAALKDDKTALALEAALITALRI</sequence>
<dbReference type="EC" id="2.7.7.59" evidence="1"/>
<dbReference type="EC" id="3.1.4.-" evidence="1"/>
<dbReference type="EMBL" id="AE016825">
    <property type="protein sequence ID" value="AAQ60585.1"/>
    <property type="molecule type" value="Genomic_DNA"/>
</dbReference>
<dbReference type="RefSeq" id="WP_011136464.1">
    <property type="nucleotide sequence ID" value="NC_005085.1"/>
</dbReference>
<dbReference type="SMR" id="Q7NTY6"/>
<dbReference type="STRING" id="243365.CV_2917"/>
<dbReference type="KEGG" id="cvi:CV_2917"/>
<dbReference type="eggNOG" id="COG2844">
    <property type="taxonomic scope" value="Bacteria"/>
</dbReference>
<dbReference type="HOGENOM" id="CLU_012833_0_0_4"/>
<dbReference type="OrthoDB" id="9758038at2"/>
<dbReference type="Proteomes" id="UP000001424">
    <property type="component" value="Chromosome"/>
</dbReference>
<dbReference type="GO" id="GO:0008773">
    <property type="term" value="F:[protein-PII] uridylyltransferase activity"/>
    <property type="evidence" value="ECO:0007669"/>
    <property type="project" value="UniProtKB-UniRule"/>
</dbReference>
<dbReference type="GO" id="GO:0008081">
    <property type="term" value="F:phosphoric diester hydrolase activity"/>
    <property type="evidence" value="ECO:0007669"/>
    <property type="project" value="UniProtKB-UniRule"/>
</dbReference>
<dbReference type="GO" id="GO:0006808">
    <property type="term" value="P:regulation of nitrogen utilization"/>
    <property type="evidence" value="ECO:0007669"/>
    <property type="project" value="UniProtKB-UniRule"/>
</dbReference>
<dbReference type="CDD" id="cd04899">
    <property type="entry name" value="ACT_ACR-UUR-like_2"/>
    <property type="match status" value="1"/>
</dbReference>
<dbReference type="CDD" id="cd04900">
    <property type="entry name" value="ACT_UUR-like_1"/>
    <property type="match status" value="1"/>
</dbReference>
<dbReference type="CDD" id="cd00077">
    <property type="entry name" value="HDc"/>
    <property type="match status" value="1"/>
</dbReference>
<dbReference type="CDD" id="cd05401">
    <property type="entry name" value="NT_GlnE_GlnD_like"/>
    <property type="match status" value="1"/>
</dbReference>
<dbReference type="Gene3D" id="3.30.70.260">
    <property type="match status" value="1"/>
</dbReference>
<dbReference type="Gene3D" id="1.10.3210.10">
    <property type="entry name" value="Hypothetical protein af1432"/>
    <property type="match status" value="1"/>
</dbReference>
<dbReference type="HAMAP" id="MF_00277">
    <property type="entry name" value="PII_uridylyl_transf"/>
    <property type="match status" value="1"/>
</dbReference>
<dbReference type="InterPro" id="IPR045865">
    <property type="entry name" value="ACT-like_dom_sf"/>
</dbReference>
<dbReference type="InterPro" id="IPR002912">
    <property type="entry name" value="ACT_dom"/>
</dbReference>
<dbReference type="InterPro" id="IPR003607">
    <property type="entry name" value="HD/PDEase_dom"/>
</dbReference>
<dbReference type="InterPro" id="IPR006674">
    <property type="entry name" value="HD_domain"/>
</dbReference>
<dbReference type="InterPro" id="IPR043519">
    <property type="entry name" value="NT_sf"/>
</dbReference>
<dbReference type="InterPro" id="IPR013546">
    <property type="entry name" value="PII_UdlTrfase/GS_AdlTrfase"/>
</dbReference>
<dbReference type="InterPro" id="IPR002934">
    <property type="entry name" value="Polymerase_NTP_transf_dom"/>
</dbReference>
<dbReference type="InterPro" id="IPR010043">
    <property type="entry name" value="UTase/UR"/>
</dbReference>
<dbReference type="NCBIfam" id="NF002837">
    <property type="entry name" value="PRK03059.1"/>
    <property type="match status" value="1"/>
</dbReference>
<dbReference type="NCBIfam" id="TIGR01693">
    <property type="entry name" value="UTase_glnD"/>
    <property type="match status" value="1"/>
</dbReference>
<dbReference type="PANTHER" id="PTHR47320">
    <property type="entry name" value="BIFUNCTIONAL URIDYLYLTRANSFERASE/URIDYLYL-REMOVING ENZYME"/>
    <property type="match status" value="1"/>
</dbReference>
<dbReference type="PANTHER" id="PTHR47320:SF1">
    <property type="entry name" value="BIFUNCTIONAL URIDYLYLTRANSFERASE_URIDYLYL-REMOVING ENZYME"/>
    <property type="match status" value="1"/>
</dbReference>
<dbReference type="Pfam" id="PF01842">
    <property type="entry name" value="ACT"/>
    <property type="match status" value="1"/>
</dbReference>
<dbReference type="Pfam" id="PF08335">
    <property type="entry name" value="GlnD_UR_UTase"/>
    <property type="match status" value="1"/>
</dbReference>
<dbReference type="Pfam" id="PF01966">
    <property type="entry name" value="HD"/>
    <property type="match status" value="1"/>
</dbReference>
<dbReference type="Pfam" id="PF01909">
    <property type="entry name" value="NTP_transf_2"/>
    <property type="match status" value="1"/>
</dbReference>
<dbReference type="PIRSF" id="PIRSF006288">
    <property type="entry name" value="PII_uridyltransf"/>
    <property type="match status" value="1"/>
</dbReference>
<dbReference type="SMART" id="SM00471">
    <property type="entry name" value="HDc"/>
    <property type="match status" value="1"/>
</dbReference>
<dbReference type="SUPFAM" id="SSF55021">
    <property type="entry name" value="ACT-like"/>
    <property type="match status" value="2"/>
</dbReference>
<dbReference type="SUPFAM" id="SSF109604">
    <property type="entry name" value="HD-domain/PDEase-like"/>
    <property type="match status" value="1"/>
</dbReference>
<dbReference type="SUPFAM" id="SSF81301">
    <property type="entry name" value="Nucleotidyltransferase"/>
    <property type="match status" value="1"/>
</dbReference>
<dbReference type="SUPFAM" id="SSF81593">
    <property type="entry name" value="Nucleotidyltransferase substrate binding subunit/domain"/>
    <property type="match status" value="1"/>
</dbReference>
<dbReference type="PROSITE" id="PS51671">
    <property type="entry name" value="ACT"/>
    <property type="match status" value="2"/>
</dbReference>
<dbReference type="PROSITE" id="PS51831">
    <property type="entry name" value="HD"/>
    <property type="match status" value="1"/>
</dbReference>